<dbReference type="EC" id="2.4.1.18" evidence="1"/>
<dbReference type="EMBL" id="CP000051">
    <property type="protein sequence ID" value="AAX51152.1"/>
    <property type="molecule type" value="Genomic_DNA"/>
</dbReference>
<dbReference type="RefSeq" id="WP_009872256.1">
    <property type="nucleotide sequence ID" value="NC_007429.1"/>
</dbReference>
<dbReference type="SMR" id="Q3KKH0"/>
<dbReference type="CAZy" id="CBM48">
    <property type="family name" value="Carbohydrate-Binding Module Family 48"/>
</dbReference>
<dbReference type="CAZy" id="GH13">
    <property type="family name" value="Glycoside Hydrolase Family 13"/>
</dbReference>
<dbReference type="KEGG" id="cta:CTA_0946"/>
<dbReference type="HOGENOM" id="CLU_004245_3_2_0"/>
<dbReference type="UniPathway" id="UPA00164"/>
<dbReference type="Proteomes" id="UP000002532">
    <property type="component" value="Chromosome"/>
</dbReference>
<dbReference type="GO" id="GO:0005829">
    <property type="term" value="C:cytosol"/>
    <property type="evidence" value="ECO:0007669"/>
    <property type="project" value="TreeGrafter"/>
</dbReference>
<dbReference type="GO" id="GO:0003844">
    <property type="term" value="F:1,4-alpha-glucan branching enzyme activity"/>
    <property type="evidence" value="ECO:0007669"/>
    <property type="project" value="UniProtKB-UniRule"/>
</dbReference>
<dbReference type="GO" id="GO:0043169">
    <property type="term" value="F:cation binding"/>
    <property type="evidence" value="ECO:0007669"/>
    <property type="project" value="InterPro"/>
</dbReference>
<dbReference type="GO" id="GO:0004553">
    <property type="term" value="F:hydrolase activity, hydrolyzing O-glycosyl compounds"/>
    <property type="evidence" value="ECO:0007669"/>
    <property type="project" value="InterPro"/>
</dbReference>
<dbReference type="GO" id="GO:0005978">
    <property type="term" value="P:glycogen biosynthetic process"/>
    <property type="evidence" value="ECO:0007669"/>
    <property type="project" value="UniProtKB-UniRule"/>
</dbReference>
<dbReference type="CDD" id="cd11322">
    <property type="entry name" value="AmyAc_Glg_BE"/>
    <property type="match status" value="1"/>
</dbReference>
<dbReference type="CDD" id="cd02855">
    <property type="entry name" value="E_set_GBE_prok_N"/>
    <property type="match status" value="1"/>
</dbReference>
<dbReference type="FunFam" id="2.60.40.10:FF:000169">
    <property type="entry name" value="1,4-alpha-glucan branching enzyme GlgB"/>
    <property type="match status" value="1"/>
</dbReference>
<dbReference type="FunFam" id="3.20.20.80:FF:000003">
    <property type="entry name" value="1,4-alpha-glucan branching enzyme GlgB"/>
    <property type="match status" value="1"/>
</dbReference>
<dbReference type="Gene3D" id="3.20.20.80">
    <property type="entry name" value="Glycosidases"/>
    <property type="match status" value="1"/>
</dbReference>
<dbReference type="Gene3D" id="2.60.40.1180">
    <property type="entry name" value="Golgi alpha-mannosidase II"/>
    <property type="match status" value="1"/>
</dbReference>
<dbReference type="Gene3D" id="2.60.40.10">
    <property type="entry name" value="Immunoglobulins"/>
    <property type="match status" value="1"/>
</dbReference>
<dbReference type="HAMAP" id="MF_00685">
    <property type="entry name" value="GlgB"/>
    <property type="match status" value="1"/>
</dbReference>
<dbReference type="InterPro" id="IPR006048">
    <property type="entry name" value="A-amylase/branching_C"/>
</dbReference>
<dbReference type="InterPro" id="IPR037439">
    <property type="entry name" value="Branching_enzy"/>
</dbReference>
<dbReference type="InterPro" id="IPR006407">
    <property type="entry name" value="GlgB"/>
</dbReference>
<dbReference type="InterPro" id="IPR044143">
    <property type="entry name" value="GlgB_N_E_set_prok"/>
</dbReference>
<dbReference type="InterPro" id="IPR006047">
    <property type="entry name" value="Glyco_hydro_13_cat_dom"/>
</dbReference>
<dbReference type="InterPro" id="IPR004193">
    <property type="entry name" value="Glyco_hydro_13_N"/>
</dbReference>
<dbReference type="InterPro" id="IPR013780">
    <property type="entry name" value="Glyco_hydro_b"/>
</dbReference>
<dbReference type="InterPro" id="IPR017853">
    <property type="entry name" value="Glycoside_hydrolase_SF"/>
</dbReference>
<dbReference type="InterPro" id="IPR013783">
    <property type="entry name" value="Ig-like_fold"/>
</dbReference>
<dbReference type="InterPro" id="IPR014756">
    <property type="entry name" value="Ig_E-set"/>
</dbReference>
<dbReference type="NCBIfam" id="TIGR01515">
    <property type="entry name" value="branching_enzym"/>
    <property type="match status" value="1"/>
</dbReference>
<dbReference type="NCBIfam" id="NF003811">
    <property type="entry name" value="PRK05402.1"/>
    <property type="match status" value="1"/>
</dbReference>
<dbReference type="NCBIfam" id="NF008967">
    <property type="entry name" value="PRK12313.1"/>
    <property type="match status" value="1"/>
</dbReference>
<dbReference type="PANTHER" id="PTHR43651">
    <property type="entry name" value="1,4-ALPHA-GLUCAN-BRANCHING ENZYME"/>
    <property type="match status" value="1"/>
</dbReference>
<dbReference type="PANTHER" id="PTHR43651:SF3">
    <property type="entry name" value="1,4-ALPHA-GLUCAN-BRANCHING ENZYME"/>
    <property type="match status" value="1"/>
</dbReference>
<dbReference type="Pfam" id="PF00128">
    <property type="entry name" value="Alpha-amylase"/>
    <property type="match status" value="2"/>
</dbReference>
<dbReference type="Pfam" id="PF02806">
    <property type="entry name" value="Alpha-amylase_C"/>
    <property type="match status" value="1"/>
</dbReference>
<dbReference type="Pfam" id="PF02922">
    <property type="entry name" value="CBM_48"/>
    <property type="match status" value="1"/>
</dbReference>
<dbReference type="PIRSF" id="PIRSF000463">
    <property type="entry name" value="GlgB"/>
    <property type="match status" value="1"/>
</dbReference>
<dbReference type="SMART" id="SM00642">
    <property type="entry name" value="Aamy"/>
    <property type="match status" value="1"/>
</dbReference>
<dbReference type="SUPFAM" id="SSF51445">
    <property type="entry name" value="(Trans)glycosidases"/>
    <property type="match status" value="1"/>
</dbReference>
<dbReference type="SUPFAM" id="SSF81296">
    <property type="entry name" value="E set domains"/>
    <property type="match status" value="2"/>
</dbReference>
<dbReference type="SUPFAM" id="SSF51011">
    <property type="entry name" value="Glycosyl hydrolase domain"/>
    <property type="match status" value="1"/>
</dbReference>
<reference key="1">
    <citation type="journal article" date="2005" name="Infect. Immun.">
        <title>Comparative genomic analysis of Chlamydia trachomatis oculotropic and genitotropic strains.</title>
        <authorList>
            <person name="Carlson J.H."/>
            <person name="Porcella S.F."/>
            <person name="McClarty G."/>
            <person name="Caldwell H.D."/>
        </authorList>
    </citation>
    <scope>NUCLEOTIDE SEQUENCE [LARGE SCALE GENOMIC DNA]</scope>
    <source>
        <strain>ATCC VR-571B / DSM 19440 / HAR-13</strain>
    </source>
</reference>
<protein>
    <recommendedName>
        <fullName evidence="1">1,4-alpha-glucan branching enzyme GlgB</fullName>
        <ecNumber evidence="1">2.4.1.18</ecNumber>
    </recommendedName>
    <alternativeName>
        <fullName evidence="1">1,4-alpha-D-glucan:1,4-alpha-D-glucan 6-glucosyl-transferase</fullName>
    </alternativeName>
    <alternativeName>
        <fullName evidence="1">Alpha-(1-&gt;4)-glucan branching enzyme</fullName>
    </alternativeName>
    <alternativeName>
        <fullName evidence="1">Glycogen branching enzyme</fullName>
        <shortName evidence="1">BE</shortName>
    </alternativeName>
</protein>
<feature type="chain" id="PRO_0000260642" description="1,4-alpha-glucan branching enzyme GlgB">
    <location>
        <begin position="1"/>
        <end position="738"/>
    </location>
</feature>
<feature type="active site" description="Nucleophile" evidence="1">
    <location>
        <position position="399"/>
    </location>
</feature>
<feature type="active site" description="Proton donor" evidence="1">
    <location>
        <position position="452"/>
    </location>
</feature>
<evidence type="ECO:0000255" key="1">
    <source>
        <dbReference type="HAMAP-Rule" id="MF_00685"/>
    </source>
</evidence>
<sequence length="738" mass="84649">MDPFFLNTQHVELLVSGKQSSPQDLLGIVSESLNQDRIVLFRPGAETVFVELRGKIQQAESHHSGIFSLPVMKGISPQDYRVYHQNGLLAHDPYAFPLLWGEIDSFLFHEGTHQRIYERMGAIPCEIDGVPGVRFIVWAPHAQRVSVIGDFNGWHGLVNPLHKVSDQGVWELFVPGLTAGACYKWEMVTESGQVLIKSDPYGKFFGPPPRSVSVVIDDSYEWTDSEWLEERIKKTEGPMNIYEVHVGSWRWQEGQPLNYRELADQLALYCKQMHYTHVELLPVTEHPLNESWGYQTTGYYAPTSRYGSFEDLQYFIDTMHQHGIGVILDWVPGHFPIDSFAMSGFDGTPLYEYTRNPSPLHPHWHTYTFDYAKPEVCNFLLGSVLFWIDKMHVDGIRVDAVSSMLYLDYGRYAGEWVPNRYGGRENLDAIRFLQQFNTVIHEKYPGVLTFAEESTTFPKITVSVEEGGLGFDYKWNMGWMHDTLHYFEKDFPYRPYHQSDLTFPQWYAFSERFLLPFSHDEVVHGKRSLIGKMPGDAWRQFAQLRLLLGYQICQPGKKLLFMGGEFGQGREWSPGRELDWELLDISYHQGVHLCSQELNALYVQSPQLWQADHLPSSFRWVDFSDVRNGVVAYLRFADADAKKALLCVHHFGVGYFPHYLLPILPLESCDLLMNTDDTRFGGSGKGFREPEILTPEIARQEREAAGLIEADDESGPDCWGLDIELPPSATLIFSVTLQ</sequence>
<comment type="function">
    <text evidence="1">Catalyzes the formation of the alpha-1,6-glucosidic linkages in glycogen by scission of a 1,4-alpha-linked oligosaccharide from growing alpha-1,4-glucan chains and the subsequent attachment of the oligosaccharide to the alpha-1,6 position.</text>
</comment>
<comment type="catalytic activity">
    <reaction evidence="1">
        <text>Transfers a segment of a (1-&gt;4)-alpha-D-glucan chain to a primary hydroxy group in a similar glucan chain.</text>
        <dbReference type="EC" id="2.4.1.18"/>
    </reaction>
</comment>
<comment type="pathway">
    <text evidence="1">Glycan biosynthesis; glycogen biosynthesis.</text>
</comment>
<comment type="subunit">
    <text evidence="1">Monomer.</text>
</comment>
<comment type="similarity">
    <text evidence="1">Belongs to the glycosyl hydrolase 13 family. GlgB subfamily.</text>
</comment>
<name>GLGB_CHLTA</name>
<proteinExistence type="inferred from homology"/>
<organism>
    <name type="scientific">Chlamydia trachomatis serovar A (strain ATCC VR-571B / DSM 19440 / HAR-13)</name>
    <dbReference type="NCBI Taxonomy" id="315277"/>
    <lineage>
        <taxon>Bacteria</taxon>
        <taxon>Pseudomonadati</taxon>
        <taxon>Chlamydiota</taxon>
        <taxon>Chlamydiia</taxon>
        <taxon>Chlamydiales</taxon>
        <taxon>Chlamydiaceae</taxon>
        <taxon>Chlamydia/Chlamydophila group</taxon>
        <taxon>Chlamydia</taxon>
    </lineage>
</organism>
<keyword id="KW-0119">Carbohydrate metabolism</keyword>
<keyword id="KW-0320">Glycogen biosynthesis</keyword>
<keyword id="KW-0321">Glycogen metabolism</keyword>
<keyword id="KW-0328">Glycosyltransferase</keyword>
<keyword id="KW-0808">Transferase</keyword>
<gene>
    <name evidence="1" type="primary">glgB</name>
    <name type="ordered locus">CTA_0946</name>
</gene>
<accession>Q3KKH0</accession>